<dbReference type="EMBL" id="AE014299">
    <property type="protein sequence ID" value="AAN57198.1"/>
    <property type="molecule type" value="Genomic_DNA"/>
</dbReference>
<dbReference type="RefSeq" id="NP_719754.1">
    <property type="nucleotide sequence ID" value="NC_004347.2"/>
</dbReference>
<dbReference type="RefSeq" id="WP_011073907.1">
    <property type="nucleotide sequence ID" value="NC_004347.2"/>
</dbReference>
<dbReference type="SMR" id="Q8E9P1"/>
<dbReference type="STRING" id="211586.SO_4226"/>
<dbReference type="PaxDb" id="211586-SO_4226"/>
<dbReference type="KEGG" id="son:SO_4226"/>
<dbReference type="PATRIC" id="fig|211586.12.peg.4084"/>
<dbReference type="eggNOG" id="COG3116">
    <property type="taxonomic scope" value="Bacteria"/>
</dbReference>
<dbReference type="HOGENOM" id="CLU_156524_2_0_6"/>
<dbReference type="OrthoDB" id="6196803at2"/>
<dbReference type="PhylomeDB" id="Q8E9P1"/>
<dbReference type="BioCyc" id="SONE211586:G1GMP-3903-MONOMER"/>
<dbReference type="Proteomes" id="UP000008186">
    <property type="component" value="Chromosome"/>
</dbReference>
<dbReference type="GO" id="GO:0032153">
    <property type="term" value="C:cell division site"/>
    <property type="evidence" value="ECO:0000318"/>
    <property type="project" value="GO_Central"/>
</dbReference>
<dbReference type="GO" id="GO:0005886">
    <property type="term" value="C:plasma membrane"/>
    <property type="evidence" value="ECO:0000318"/>
    <property type="project" value="GO_Central"/>
</dbReference>
<dbReference type="GO" id="GO:0043093">
    <property type="term" value="P:FtsZ-dependent cytokinesis"/>
    <property type="evidence" value="ECO:0000318"/>
    <property type="project" value="GO_Central"/>
</dbReference>
<dbReference type="HAMAP" id="MF_00910">
    <property type="entry name" value="FtsL"/>
    <property type="match status" value="1"/>
</dbReference>
<dbReference type="InterPro" id="IPR011922">
    <property type="entry name" value="Cell_div_FtsL"/>
</dbReference>
<dbReference type="NCBIfam" id="TIGR02209">
    <property type="entry name" value="ftsL_broad"/>
    <property type="match status" value="1"/>
</dbReference>
<dbReference type="PANTHER" id="PTHR37479">
    <property type="entry name" value="CELL DIVISION PROTEIN FTSL"/>
    <property type="match status" value="1"/>
</dbReference>
<dbReference type="PANTHER" id="PTHR37479:SF1">
    <property type="entry name" value="CELL DIVISION PROTEIN FTSL"/>
    <property type="match status" value="1"/>
</dbReference>
<dbReference type="Pfam" id="PF04999">
    <property type="entry name" value="FtsL"/>
    <property type="match status" value="1"/>
</dbReference>
<feature type="chain" id="PRO_0000414568" description="Cell division protein FtsL">
    <location>
        <begin position="1"/>
        <end position="104"/>
    </location>
</feature>
<feature type="topological domain" description="Cytoplasmic" evidence="1">
    <location>
        <begin position="1"/>
        <end position="20"/>
    </location>
</feature>
<feature type="transmembrane region" description="Helical" evidence="1">
    <location>
        <begin position="21"/>
        <end position="43"/>
    </location>
</feature>
<feature type="topological domain" description="Periplasmic" evidence="1">
    <location>
        <begin position="44"/>
        <end position="104"/>
    </location>
</feature>
<proteinExistence type="inferred from homology"/>
<organism>
    <name type="scientific">Shewanella oneidensis (strain ATCC 700550 / JCM 31522 / CIP 106686 / LMG 19005 / NCIMB 14063 / MR-1)</name>
    <dbReference type="NCBI Taxonomy" id="211586"/>
    <lineage>
        <taxon>Bacteria</taxon>
        <taxon>Pseudomonadati</taxon>
        <taxon>Pseudomonadota</taxon>
        <taxon>Gammaproteobacteria</taxon>
        <taxon>Alteromonadales</taxon>
        <taxon>Shewanellaceae</taxon>
        <taxon>Shewanella</taxon>
    </lineage>
</organism>
<protein>
    <recommendedName>
        <fullName evidence="1">Cell division protein FtsL</fullName>
    </recommendedName>
</protein>
<gene>
    <name evidence="1" type="primary">ftsL</name>
    <name type="ordered locus">SO_4226</name>
</gene>
<evidence type="ECO:0000255" key="1">
    <source>
        <dbReference type="HAMAP-Rule" id="MF_00910"/>
    </source>
</evidence>
<comment type="function">
    <text evidence="1">Essential cell division protein. May link together the upstream cell division proteins, which are predominantly cytoplasmic, with the downstream cell division proteins, which are predominantly periplasmic.</text>
</comment>
<comment type="subunit">
    <text evidence="1">Part of a complex composed of FtsB, FtsL and FtsQ.</text>
</comment>
<comment type="subcellular location">
    <subcellularLocation>
        <location evidence="1">Cell inner membrane</location>
        <topology evidence="1">Single-pass type II membrane protein</topology>
    </subcellularLocation>
    <text evidence="1">Localizes to the division septum where it forms a ring structure.</text>
</comment>
<comment type="similarity">
    <text evidence="1">Belongs to the FtsL family.</text>
</comment>
<accession>Q8E9P1</accession>
<sequence length="104" mass="12187">MSKPSLTLPRIVLHDLWQHKWILLLALLVLSNAVAVVYTSHVSRKLTTEWDQLLQERDRLDIEWRNLLLEEQSQTEHSRITRIASKDLNMSRPLPSEEIVVKVP</sequence>
<name>FTSL_SHEON</name>
<keyword id="KW-0131">Cell cycle</keyword>
<keyword id="KW-0132">Cell division</keyword>
<keyword id="KW-0997">Cell inner membrane</keyword>
<keyword id="KW-1003">Cell membrane</keyword>
<keyword id="KW-0472">Membrane</keyword>
<keyword id="KW-1185">Reference proteome</keyword>
<keyword id="KW-0812">Transmembrane</keyword>
<keyword id="KW-1133">Transmembrane helix</keyword>
<reference key="1">
    <citation type="journal article" date="2002" name="Nat. Biotechnol.">
        <title>Genome sequence of the dissimilatory metal ion-reducing bacterium Shewanella oneidensis.</title>
        <authorList>
            <person name="Heidelberg J.F."/>
            <person name="Paulsen I.T."/>
            <person name="Nelson K.E."/>
            <person name="Gaidos E.J."/>
            <person name="Nelson W.C."/>
            <person name="Read T.D."/>
            <person name="Eisen J.A."/>
            <person name="Seshadri R."/>
            <person name="Ward N.L."/>
            <person name="Methe B.A."/>
            <person name="Clayton R.A."/>
            <person name="Meyer T."/>
            <person name="Tsapin A."/>
            <person name="Scott J."/>
            <person name="Beanan M.J."/>
            <person name="Brinkac L.M."/>
            <person name="Daugherty S.C."/>
            <person name="DeBoy R.T."/>
            <person name="Dodson R.J."/>
            <person name="Durkin A.S."/>
            <person name="Haft D.H."/>
            <person name="Kolonay J.F."/>
            <person name="Madupu R."/>
            <person name="Peterson J.D."/>
            <person name="Umayam L.A."/>
            <person name="White O."/>
            <person name="Wolf A.M."/>
            <person name="Vamathevan J.J."/>
            <person name="Weidman J.F."/>
            <person name="Impraim M."/>
            <person name="Lee K."/>
            <person name="Berry K.J."/>
            <person name="Lee C."/>
            <person name="Mueller J."/>
            <person name="Khouri H.M."/>
            <person name="Gill J."/>
            <person name="Utterback T.R."/>
            <person name="McDonald L.A."/>
            <person name="Feldblyum T.V."/>
            <person name="Smith H.O."/>
            <person name="Venter J.C."/>
            <person name="Nealson K.H."/>
            <person name="Fraser C.M."/>
        </authorList>
    </citation>
    <scope>NUCLEOTIDE SEQUENCE [LARGE SCALE GENOMIC DNA]</scope>
    <source>
        <strain>ATCC 700550 / JCM 31522 / CIP 106686 / LMG 19005 / NCIMB 14063 / MR-1</strain>
    </source>
</reference>